<comment type="function">
    <text evidence="1">Catalyzes the conversion of 3-deoxy-D-arabino-heptulosonate 7-phosphate (DAHP) to dehydroquinate (DHQ).</text>
</comment>
<comment type="catalytic activity">
    <reaction evidence="1">
        <text>7-phospho-2-dehydro-3-deoxy-D-arabino-heptonate = 3-dehydroquinate + phosphate</text>
        <dbReference type="Rhea" id="RHEA:21968"/>
        <dbReference type="ChEBI" id="CHEBI:32364"/>
        <dbReference type="ChEBI" id="CHEBI:43474"/>
        <dbReference type="ChEBI" id="CHEBI:58394"/>
        <dbReference type="EC" id="4.2.3.4"/>
    </reaction>
</comment>
<comment type="cofactor">
    <cofactor evidence="1">
        <name>Co(2+)</name>
        <dbReference type="ChEBI" id="CHEBI:48828"/>
    </cofactor>
    <cofactor evidence="1">
        <name>Zn(2+)</name>
        <dbReference type="ChEBI" id="CHEBI:29105"/>
    </cofactor>
    <text evidence="1">Binds 1 divalent metal cation per subunit. Can use either Co(2+) or Zn(2+).</text>
</comment>
<comment type="cofactor">
    <cofactor evidence="1">
        <name>NAD(+)</name>
        <dbReference type="ChEBI" id="CHEBI:57540"/>
    </cofactor>
</comment>
<comment type="pathway">
    <text evidence="1">Metabolic intermediate biosynthesis; chorismate biosynthesis; chorismate from D-erythrose 4-phosphate and phosphoenolpyruvate: step 2/7.</text>
</comment>
<comment type="subcellular location">
    <subcellularLocation>
        <location evidence="1">Cytoplasm</location>
    </subcellularLocation>
</comment>
<comment type="similarity">
    <text evidence="1">Belongs to the sugar phosphate cyclases superfamily. Dehydroquinate synthase family.</text>
</comment>
<feature type="chain" id="PRO_1000094651" description="3-dehydroquinate synthase">
    <location>
        <begin position="1"/>
        <end position="360"/>
    </location>
</feature>
<feature type="binding site" evidence="1">
    <location>
        <begin position="69"/>
        <end position="74"/>
    </location>
    <ligand>
        <name>NAD(+)</name>
        <dbReference type="ChEBI" id="CHEBI:57540"/>
    </ligand>
</feature>
<feature type="binding site" evidence="1">
    <location>
        <begin position="103"/>
        <end position="107"/>
    </location>
    <ligand>
        <name>NAD(+)</name>
        <dbReference type="ChEBI" id="CHEBI:57540"/>
    </ligand>
</feature>
<feature type="binding site" evidence="1">
    <location>
        <begin position="127"/>
        <end position="128"/>
    </location>
    <ligand>
        <name>NAD(+)</name>
        <dbReference type="ChEBI" id="CHEBI:57540"/>
    </ligand>
</feature>
<feature type="binding site" evidence="1">
    <location>
        <position position="140"/>
    </location>
    <ligand>
        <name>NAD(+)</name>
        <dbReference type="ChEBI" id="CHEBI:57540"/>
    </ligand>
</feature>
<feature type="binding site" evidence="1">
    <location>
        <position position="149"/>
    </location>
    <ligand>
        <name>NAD(+)</name>
        <dbReference type="ChEBI" id="CHEBI:57540"/>
    </ligand>
</feature>
<feature type="binding site" evidence="1">
    <location>
        <begin position="167"/>
        <end position="170"/>
    </location>
    <ligand>
        <name>NAD(+)</name>
        <dbReference type="ChEBI" id="CHEBI:57540"/>
    </ligand>
</feature>
<feature type="binding site" evidence="1">
    <location>
        <position position="182"/>
    </location>
    <ligand>
        <name>Zn(2+)</name>
        <dbReference type="ChEBI" id="CHEBI:29105"/>
    </ligand>
</feature>
<feature type="binding site" evidence="1">
    <location>
        <position position="246"/>
    </location>
    <ligand>
        <name>Zn(2+)</name>
        <dbReference type="ChEBI" id="CHEBI:29105"/>
    </ligand>
</feature>
<feature type="binding site" evidence="1">
    <location>
        <position position="263"/>
    </location>
    <ligand>
        <name>Zn(2+)</name>
        <dbReference type="ChEBI" id="CHEBI:29105"/>
    </ligand>
</feature>
<dbReference type="EC" id="4.2.3.4" evidence="1"/>
<dbReference type="EMBL" id="AP009247">
    <property type="protein sequence ID" value="BAF61448.1"/>
    <property type="molecule type" value="Genomic_DNA"/>
</dbReference>
<dbReference type="RefSeq" id="WP_011929718.1">
    <property type="nucleotide sequence ID" value="NC_009465.1"/>
</dbReference>
<dbReference type="SMR" id="A5CX62"/>
<dbReference type="STRING" id="412965.COSY_0323"/>
<dbReference type="KEGG" id="vok:COSY_0323"/>
<dbReference type="eggNOG" id="COG0337">
    <property type="taxonomic scope" value="Bacteria"/>
</dbReference>
<dbReference type="HOGENOM" id="CLU_001201_0_2_6"/>
<dbReference type="OrthoDB" id="9806583at2"/>
<dbReference type="UniPathway" id="UPA00053">
    <property type="reaction ID" value="UER00085"/>
</dbReference>
<dbReference type="Proteomes" id="UP000000247">
    <property type="component" value="Chromosome"/>
</dbReference>
<dbReference type="GO" id="GO:0005737">
    <property type="term" value="C:cytoplasm"/>
    <property type="evidence" value="ECO:0007669"/>
    <property type="project" value="UniProtKB-SubCell"/>
</dbReference>
<dbReference type="GO" id="GO:0003856">
    <property type="term" value="F:3-dehydroquinate synthase activity"/>
    <property type="evidence" value="ECO:0007669"/>
    <property type="project" value="UniProtKB-UniRule"/>
</dbReference>
<dbReference type="GO" id="GO:0046872">
    <property type="term" value="F:metal ion binding"/>
    <property type="evidence" value="ECO:0007669"/>
    <property type="project" value="UniProtKB-KW"/>
</dbReference>
<dbReference type="GO" id="GO:0000166">
    <property type="term" value="F:nucleotide binding"/>
    <property type="evidence" value="ECO:0007669"/>
    <property type="project" value="UniProtKB-KW"/>
</dbReference>
<dbReference type="GO" id="GO:0008652">
    <property type="term" value="P:amino acid biosynthetic process"/>
    <property type="evidence" value="ECO:0007669"/>
    <property type="project" value="UniProtKB-KW"/>
</dbReference>
<dbReference type="GO" id="GO:0009073">
    <property type="term" value="P:aromatic amino acid family biosynthetic process"/>
    <property type="evidence" value="ECO:0007669"/>
    <property type="project" value="UniProtKB-KW"/>
</dbReference>
<dbReference type="GO" id="GO:0009423">
    <property type="term" value="P:chorismate biosynthetic process"/>
    <property type="evidence" value="ECO:0007669"/>
    <property type="project" value="UniProtKB-UniRule"/>
</dbReference>
<dbReference type="CDD" id="cd08195">
    <property type="entry name" value="DHQS"/>
    <property type="match status" value="1"/>
</dbReference>
<dbReference type="FunFam" id="3.40.50.1970:FF:000001">
    <property type="entry name" value="3-dehydroquinate synthase"/>
    <property type="match status" value="1"/>
</dbReference>
<dbReference type="Gene3D" id="3.40.50.1970">
    <property type="match status" value="1"/>
</dbReference>
<dbReference type="Gene3D" id="1.20.1090.10">
    <property type="entry name" value="Dehydroquinate synthase-like - alpha domain"/>
    <property type="match status" value="1"/>
</dbReference>
<dbReference type="HAMAP" id="MF_00110">
    <property type="entry name" value="DHQ_synthase"/>
    <property type="match status" value="1"/>
</dbReference>
<dbReference type="InterPro" id="IPR050071">
    <property type="entry name" value="Dehydroquinate_synthase"/>
</dbReference>
<dbReference type="InterPro" id="IPR016037">
    <property type="entry name" value="DHQ_synth_AroB"/>
</dbReference>
<dbReference type="InterPro" id="IPR030963">
    <property type="entry name" value="DHQ_synth_fam"/>
</dbReference>
<dbReference type="InterPro" id="IPR030960">
    <property type="entry name" value="DHQS/DOIS_N"/>
</dbReference>
<dbReference type="InterPro" id="IPR056179">
    <property type="entry name" value="DHQS_C"/>
</dbReference>
<dbReference type="NCBIfam" id="TIGR01357">
    <property type="entry name" value="aroB"/>
    <property type="match status" value="1"/>
</dbReference>
<dbReference type="PANTHER" id="PTHR43622">
    <property type="entry name" value="3-DEHYDROQUINATE SYNTHASE"/>
    <property type="match status" value="1"/>
</dbReference>
<dbReference type="PANTHER" id="PTHR43622:SF7">
    <property type="entry name" value="3-DEHYDROQUINATE SYNTHASE, CHLOROPLASTIC"/>
    <property type="match status" value="1"/>
</dbReference>
<dbReference type="Pfam" id="PF01761">
    <property type="entry name" value="DHQ_synthase"/>
    <property type="match status" value="1"/>
</dbReference>
<dbReference type="Pfam" id="PF24621">
    <property type="entry name" value="DHQS_C"/>
    <property type="match status" value="1"/>
</dbReference>
<dbReference type="PIRSF" id="PIRSF001455">
    <property type="entry name" value="DHQ_synth"/>
    <property type="match status" value="1"/>
</dbReference>
<dbReference type="SUPFAM" id="SSF56796">
    <property type="entry name" value="Dehydroquinate synthase-like"/>
    <property type="match status" value="1"/>
</dbReference>
<gene>
    <name evidence="1" type="primary">aroB</name>
    <name type="ordered locus">COSY_0323</name>
</gene>
<reference key="1">
    <citation type="journal article" date="2007" name="Curr. Biol.">
        <title>Reduced genome of the thioautotrophic intracellular symbiont in a deep-sea clam, Calyptogena okutanii.</title>
        <authorList>
            <person name="Kuwahara H."/>
            <person name="Yoshida T."/>
            <person name="Takaki Y."/>
            <person name="Shimamura S."/>
            <person name="Nishi S."/>
            <person name="Harada M."/>
            <person name="Matsuyama K."/>
            <person name="Takishita K."/>
            <person name="Kawato M."/>
            <person name="Uematsu K."/>
            <person name="Fujiwara Y."/>
            <person name="Sato T."/>
            <person name="Kato C."/>
            <person name="Kitagawa M."/>
            <person name="Kato I."/>
            <person name="Maruyama T."/>
        </authorList>
    </citation>
    <scope>NUCLEOTIDE SEQUENCE [LARGE SCALE GENOMIC DNA]</scope>
    <source>
        <strain>HA</strain>
    </source>
</reference>
<organism>
    <name type="scientific">Vesicomyosocius okutanii subsp. Calyptogena okutanii (strain HA)</name>
    <dbReference type="NCBI Taxonomy" id="412965"/>
    <lineage>
        <taxon>Bacteria</taxon>
        <taxon>Pseudomonadati</taxon>
        <taxon>Pseudomonadota</taxon>
        <taxon>Gammaproteobacteria</taxon>
        <taxon>Candidatus Pseudothioglobaceae</taxon>
        <taxon>Candidatus Vesicomyosocius</taxon>
    </lineage>
</organism>
<name>AROB_VESOH</name>
<protein>
    <recommendedName>
        <fullName evidence="1">3-dehydroquinate synthase</fullName>
        <shortName evidence="1">DHQS</shortName>
        <ecNumber evidence="1">4.2.3.4</ecNumber>
    </recommendedName>
</protein>
<sequence length="360" mass="40112">MKILNLDLGYKSYPIYIGQNLLLKGELLTKHISGKQVMIVTNTTVAPLYLKKVQNLLLSFEFAQVILPDGEKYKTLDTVNCIFSALLEKRFDRSCTLIALGGGVVGDMTGFVAASYQRGVNFIQIPTTLLSQVDSSVGGKTGVNHMLGKNMIGAFHQPKCVLIDIYTLDTLDSQQYSSGMAEVIKYGLLVEYLNFFNFLQENIKDLMDRKQSLIIEMIYQSCQHKINIVAQDELEMGKRTLLNLGHTFGHAIENTLGYGTFLHGEAISVGILMATRLSQLEGYLSSKQVAKIQDLLEKANLPISIIGKINASAFMKAMLVDKKVINGNIRLILLKRLGQAFICDNYNNHLLDQVVNEFCQ</sequence>
<keyword id="KW-0028">Amino-acid biosynthesis</keyword>
<keyword id="KW-0057">Aromatic amino acid biosynthesis</keyword>
<keyword id="KW-0170">Cobalt</keyword>
<keyword id="KW-0963">Cytoplasm</keyword>
<keyword id="KW-0456">Lyase</keyword>
<keyword id="KW-0479">Metal-binding</keyword>
<keyword id="KW-0520">NAD</keyword>
<keyword id="KW-0547">Nucleotide-binding</keyword>
<keyword id="KW-1185">Reference proteome</keyword>
<keyword id="KW-0862">Zinc</keyword>
<accession>A5CX62</accession>
<evidence type="ECO:0000255" key="1">
    <source>
        <dbReference type="HAMAP-Rule" id="MF_00110"/>
    </source>
</evidence>
<proteinExistence type="inferred from homology"/>